<accession>Q4UP61</accession>
<sequence length="78" mass="9091">MSRVCQVSGKRVQTGNNVSHANNRTRRRFLPNLHERRFWVASENRWVKLRVSAHALRTIDKNGIDAVLKELRARGEKV</sequence>
<keyword id="KW-0687">Ribonucleoprotein</keyword>
<keyword id="KW-0689">Ribosomal protein</keyword>
<gene>
    <name evidence="1" type="primary">rpmB</name>
    <name type="ordered locus">XC_4123</name>
</gene>
<comment type="similarity">
    <text evidence="1">Belongs to the bacterial ribosomal protein bL28 family.</text>
</comment>
<organism>
    <name type="scientific">Xanthomonas campestris pv. campestris (strain 8004)</name>
    <dbReference type="NCBI Taxonomy" id="314565"/>
    <lineage>
        <taxon>Bacteria</taxon>
        <taxon>Pseudomonadati</taxon>
        <taxon>Pseudomonadota</taxon>
        <taxon>Gammaproteobacteria</taxon>
        <taxon>Lysobacterales</taxon>
        <taxon>Lysobacteraceae</taxon>
        <taxon>Xanthomonas</taxon>
    </lineage>
</organism>
<protein>
    <recommendedName>
        <fullName evidence="1">Large ribosomal subunit protein bL28</fullName>
    </recommendedName>
    <alternativeName>
        <fullName evidence="3">50S ribosomal protein L28</fullName>
    </alternativeName>
</protein>
<reference key="1">
    <citation type="journal article" date="2005" name="Genome Res.">
        <title>Comparative and functional genomic analyses of the pathogenicity of phytopathogen Xanthomonas campestris pv. campestris.</title>
        <authorList>
            <person name="Qian W."/>
            <person name="Jia Y."/>
            <person name="Ren S.-X."/>
            <person name="He Y.-Q."/>
            <person name="Feng J.-X."/>
            <person name="Lu L.-F."/>
            <person name="Sun Q."/>
            <person name="Ying G."/>
            <person name="Tang D.-J."/>
            <person name="Tang H."/>
            <person name="Wu W."/>
            <person name="Hao P."/>
            <person name="Wang L."/>
            <person name="Jiang B.-L."/>
            <person name="Zeng S."/>
            <person name="Gu W.-Y."/>
            <person name="Lu G."/>
            <person name="Rong L."/>
            <person name="Tian Y."/>
            <person name="Yao Z."/>
            <person name="Fu G."/>
            <person name="Chen B."/>
            <person name="Fang R."/>
            <person name="Qiang B."/>
            <person name="Chen Z."/>
            <person name="Zhao G.-P."/>
            <person name="Tang J.-L."/>
            <person name="He C."/>
        </authorList>
    </citation>
    <scope>NUCLEOTIDE SEQUENCE [LARGE SCALE GENOMIC DNA]</scope>
    <source>
        <strain>8004</strain>
    </source>
</reference>
<name>RL28_XANC8</name>
<proteinExistence type="inferred from homology"/>
<evidence type="ECO:0000255" key="1">
    <source>
        <dbReference type="HAMAP-Rule" id="MF_00373"/>
    </source>
</evidence>
<evidence type="ECO:0000256" key="2">
    <source>
        <dbReference type="SAM" id="MobiDB-lite"/>
    </source>
</evidence>
<evidence type="ECO:0000305" key="3"/>
<feature type="chain" id="PRO_1000007402" description="Large ribosomal subunit protein bL28">
    <location>
        <begin position="1"/>
        <end position="78"/>
    </location>
</feature>
<feature type="region of interest" description="Disordered" evidence="2">
    <location>
        <begin position="1"/>
        <end position="23"/>
    </location>
</feature>
<feature type="compositionally biased region" description="Polar residues" evidence="2">
    <location>
        <begin position="11"/>
        <end position="22"/>
    </location>
</feature>
<dbReference type="EMBL" id="CP000050">
    <property type="protein sequence ID" value="AAY51162.1"/>
    <property type="molecule type" value="Genomic_DNA"/>
</dbReference>
<dbReference type="RefSeq" id="WP_002809459.1">
    <property type="nucleotide sequence ID" value="NZ_CP155948.1"/>
</dbReference>
<dbReference type="SMR" id="Q4UP61"/>
<dbReference type="GeneID" id="97512304"/>
<dbReference type="KEGG" id="xcb:XC_4123"/>
<dbReference type="HOGENOM" id="CLU_064548_3_1_6"/>
<dbReference type="Proteomes" id="UP000000420">
    <property type="component" value="Chromosome"/>
</dbReference>
<dbReference type="GO" id="GO:0022625">
    <property type="term" value="C:cytosolic large ribosomal subunit"/>
    <property type="evidence" value="ECO:0007669"/>
    <property type="project" value="TreeGrafter"/>
</dbReference>
<dbReference type="GO" id="GO:0003735">
    <property type="term" value="F:structural constituent of ribosome"/>
    <property type="evidence" value="ECO:0007669"/>
    <property type="project" value="InterPro"/>
</dbReference>
<dbReference type="GO" id="GO:0006412">
    <property type="term" value="P:translation"/>
    <property type="evidence" value="ECO:0007669"/>
    <property type="project" value="UniProtKB-UniRule"/>
</dbReference>
<dbReference type="FunFam" id="2.30.170.40:FF:000001">
    <property type="entry name" value="50S ribosomal protein L28"/>
    <property type="match status" value="1"/>
</dbReference>
<dbReference type="Gene3D" id="2.30.170.40">
    <property type="entry name" value="Ribosomal protein L28/L24"/>
    <property type="match status" value="1"/>
</dbReference>
<dbReference type="HAMAP" id="MF_00373">
    <property type="entry name" value="Ribosomal_bL28"/>
    <property type="match status" value="1"/>
</dbReference>
<dbReference type="InterPro" id="IPR026569">
    <property type="entry name" value="Ribosomal_bL28"/>
</dbReference>
<dbReference type="InterPro" id="IPR034704">
    <property type="entry name" value="Ribosomal_bL28/bL31-like_sf"/>
</dbReference>
<dbReference type="InterPro" id="IPR001383">
    <property type="entry name" value="Ribosomal_bL28_bact-type"/>
</dbReference>
<dbReference type="InterPro" id="IPR037147">
    <property type="entry name" value="Ribosomal_bL28_sf"/>
</dbReference>
<dbReference type="NCBIfam" id="TIGR00009">
    <property type="entry name" value="L28"/>
    <property type="match status" value="1"/>
</dbReference>
<dbReference type="PANTHER" id="PTHR13528">
    <property type="entry name" value="39S RIBOSOMAL PROTEIN L28, MITOCHONDRIAL"/>
    <property type="match status" value="1"/>
</dbReference>
<dbReference type="PANTHER" id="PTHR13528:SF2">
    <property type="entry name" value="LARGE RIBOSOMAL SUBUNIT PROTEIN BL28M"/>
    <property type="match status" value="1"/>
</dbReference>
<dbReference type="Pfam" id="PF00830">
    <property type="entry name" value="Ribosomal_L28"/>
    <property type="match status" value="1"/>
</dbReference>
<dbReference type="SUPFAM" id="SSF143800">
    <property type="entry name" value="L28p-like"/>
    <property type="match status" value="1"/>
</dbReference>